<feature type="chain" id="PRO_1000126439" description="Small ribosomal subunit protein bS20">
    <location>
        <begin position="1"/>
        <end position="87"/>
    </location>
</feature>
<feature type="region of interest" description="Disordered" evidence="2">
    <location>
        <begin position="1"/>
        <end position="26"/>
    </location>
</feature>
<keyword id="KW-0687">Ribonucleoprotein</keyword>
<keyword id="KW-0689">Ribosomal protein</keyword>
<keyword id="KW-0694">RNA-binding</keyword>
<keyword id="KW-0699">rRNA-binding</keyword>
<protein>
    <recommendedName>
        <fullName evidence="1">Small ribosomal subunit protein bS20</fullName>
    </recommendedName>
    <alternativeName>
        <fullName evidence="3">30S ribosomal protein S20</fullName>
    </alternativeName>
</protein>
<comment type="function">
    <text evidence="1">Binds directly to 16S ribosomal RNA.</text>
</comment>
<comment type="similarity">
    <text evidence="1">Belongs to the bacterial ribosomal protein bS20 family.</text>
</comment>
<reference key="1">
    <citation type="journal article" date="2011" name="Proc. Natl. Acad. Sci. U.S.A.">
        <title>Genomic anatomy of Escherichia coli O157:H7 outbreaks.</title>
        <authorList>
            <person name="Eppinger M."/>
            <person name="Mammel M.K."/>
            <person name="Leclerc J.E."/>
            <person name="Ravel J."/>
            <person name="Cebula T.A."/>
        </authorList>
    </citation>
    <scope>NUCLEOTIDE SEQUENCE [LARGE SCALE GENOMIC DNA]</scope>
    <source>
        <strain>EC4115 / EHEC</strain>
    </source>
</reference>
<evidence type="ECO:0000255" key="1">
    <source>
        <dbReference type="HAMAP-Rule" id="MF_00500"/>
    </source>
</evidence>
<evidence type="ECO:0000256" key="2">
    <source>
        <dbReference type="SAM" id="MobiDB-lite"/>
    </source>
</evidence>
<evidence type="ECO:0000305" key="3"/>
<accession>B5YYB6</accession>
<name>RS20_ECO5E</name>
<organism>
    <name type="scientific">Escherichia coli O157:H7 (strain EC4115 / EHEC)</name>
    <dbReference type="NCBI Taxonomy" id="444450"/>
    <lineage>
        <taxon>Bacteria</taxon>
        <taxon>Pseudomonadati</taxon>
        <taxon>Pseudomonadota</taxon>
        <taxon>Gammaproteobacteria</taxon>
        <taxon>Enterobacterales</taxon>
        <taxon>Enterobacteriaceae</taxon>
        <taxon>Escherichia</taxon>
    </lineage>
</organism>
<proteinExistence type="inferred from homology"/>
<sequence length="87" mass="9684">MANIKSAKKRAIQSEKARKHNASRRSMMRTFIKKVYAAIEAGDKAAAQKAFNEMQPIVDRQAAKGLIHKNKAARHKANLTAQINKLA</sequence>
<dbReference type="EMBL" id="CP001164">
    <property type="protein sequence ID" value="ACI38560.1"/>
    <property type="molecule type" value="Genomic_DNA"/>
</dbReference>
<dbReference type="RefSeq" id="WP_001274021.1">
    <property type="nucleotide sequence ID" value="NC_011353.1"/>
</dbReference>
<dbReference type="SMR" id="B5YYB6"/>
<dbReference type="GeneID" id="93777413"/>
<dbReference type="KEGG" id="ecf:ECH74115_0026"/>
<dbReference type="HOGENOM" id="CLU_160655_4_0_6"/>
<dbReference type="GO" id="GO:0005829">
    <property type="term" value="C:cytosol"/>
    <property type="evidence" value="ECO:0007669"/>
    <property type="project" value="TreeGrafter"/>
</dbReference>
<dbReference type="GO" id="GO:0015935">
    <property type="term" value="C:small ribosomal subunit"/>
    <property type="evidence" value="ECO:0007669"/>
    <property type="project" value="TreeGrafter"/>
</dbReference>
<dbReference type="GO" id="GO:0070181">
    <property type="term" value="F:small ribosomal subunit rRNA binding"/>
    <property type="evidence" value="ECO:0007669"/>
    <property type="project" value="TreeGrafter"/>
</dbReference>
<dbReference type="GO" id="GO:0003735">
    <property type="term" value="F:structural constituent of ribosome"/>
    <property type="evidence" value="ECO:0007669"/>
    <property type="project" value="InterPro"/>
</dbReference>
<dbReference type="GO" id="GO:0006412">
    <property type="term" value="P:translation"/>
    <property type="evidence" value="ECO:0007669"/>
    <property type="project" value="UniProtKB-UniRule"/>
</dbReference>
<dbReference type="FunFam" id="1.20.58.110:FF:000001">
    <property type="entry name" value="30S ribosomal protein S20"/>
    <property type="match status" value="1"/>
</dbReference>
<dbReference type="Gene3D" id="1.20.58.110">
    <property type="entry name" value="Ribosomal protein S20"/>
    <property type="match status" value="1"/>
</dbReference>
<dbReference type="HAMAP" id="MF_00500">
    <property type="entry name" value="Ribosomal_bS20"/>
    <property type="match status" value="1"/>
</dbReference>
<dbReference type="InterPro" id="IPR002583">
    <property type="entry name" value="Ribosomal_bS20"/>
</dbReference>
<dbReference type="InterPro" id="IPR036510">
    <property type="entry name" value="Ribosomal_bS20_sf"/>
</dbReference>
<dbReference type="NCBIfam" id="TIGR00029">
    <property type="entry name" value="S20"/>
    <property type="match status" value="1"/>
</dbReference>
<dbReference type="PANTHER" id="PTHR33398">
    <property type="entry name" value="30S RIBOSOMAL PROTEIN S20"/>
    <property type="match status" value="1"/>
</dbReference>
<dbReference type="PANTHER" id="PTHR33398:SF1">
    <property type="entry name" value="SMALL RIBOSOMAL SUBUNIT PROTEIN BS20C"/>
    <property type="match status" value="1"/>
</dbReference>
<dbReference type="Pfam" id="PF01649">
    <property type="entry name" value="Ribosomal_S20p"/>
    <property type="match status" value="1"/>
</dbReference>
<dbReference type="SUPFAM" id="SSF46992">
    <property type="entry name" value="Ribosomal protein S20"/>
    <property type="match status" value="1"/>
</dbReference>
<gene>
    <name evidence="1" type="primary">rpsT</name>
    <name type="ordered locus">ECH74115_0026</name>
</gene>